<gene>
    <name evidence="11" type="primary">QC</name>
    <name evidence="11" type="ORF">CG32412</name>
</gene>
<dbReference type="EC" id="2.3.2.5" evidence="5 6"/>
<dbReference type="EMBL" id="AE014296">
    <property type="protein sequence ID" value="AAF50733.2"/>
    <property type="molecule type" value="Genomic_DNA"/>
</dbReference>
<dbReference type="EMBL" id="AY119500">
    <property type="protein sequence ID" value="AAM50154.1"/>
    <property type="molecule type" value="mRNA"/>
</dbReference>
<dbReference type="RefSeq" id="NP_729109.1">
    <property type="nucleotide sequence ID" value="NM_168145.3"/>
</dbReference>
<dbReference type="PDB" id="4F9U">
    <property type="method" value="X-ray"/>
    <property type="resolution" value="1.80 A"/>
    <property type="chains" value="A/B=29-340"/>
</dbReference>
<dbReference type="PDB" id="4F9V">
    <property type="method" value="X-ray"/>
    <property type="resolution" value="2.10 A"/>
    <property type="chains" value="A/B=29-340"/>
</dbReference>
<dbReference type="PDB" id="4FWU">
    <property type="method" value="X-ray"/>
    <property type="resolution" value="2.00 A"/>
    <property type="chains" value="A=29-340"/>
</dbReference>
<dbReference type="PDBsum" id="4F9U"/>
<dbReference type="PDBsum" id="4F9V"/>
<dbReference type="PDBsum" id="4FWU"/>
<dbReference type="SMR" id="Q9VRQ9"/>
<dbReference type="FunCoup" id="Q9VRQ9">
    <property type="interactions" value="7"/>
</dbReference>
<dbReference type="IntAct" id="Q9VRQ9">
    <property type="interactions" value="1"/>
</dbReference>
<dbReference type="STRING" id="7227.FBpp0076788"/>
<dbReference type="GlyCosmos" id="Q9VRQ9">
    <property type="glycosylation" value="1 site, No reported glycans"/>
</dbReference>
<dbReference type="GlyGen" id="Q9VRQ9">
    <property type="glycosylation" value="2 sites"/>
</dbReference>
<dbReference type="iPTMnet" id="Q9VRQ9"/>
<dbReference type="PaxDb" id="7227-FBpp0076788"/>
<dbReference type="DNASU" id="38663"/>
<dbReference type="EnsemblMetazoa" id="FBtr0077080">
    <property type="protein sequence ID" value="FBpp0076788"/>
    <property type="gene ID" value="FBgn0052412"/>
</dbReference>
<dbReference type="GeneID" id="38663"/>
<dbReference type="KEGG" id="dme:Dmel_CG32412"/>
<dbReference type="UCSC" id="CG32412-RA">
    <property type="organism name" value="d. melanogaster"/>
</dbReference>
<dbReference type="AGR" id="FB:FBgn0052412"/>
<dbReference type="CTD" id="38663"/>
<dbReference type="FlyBase" id="FBgn0052412">
    <property type="gene designation" value="QC"/>
</dbReference>
<dbReference type="VEuPathDB" id="VectorBase:FBgn0052412"/>
<dbReference type="eggNOG" id="KOG3946">
    <property type="taxonomic scope" value="Eukaryota"/>
</dbReference>
<dbReference type="GeneTree" id="ENSGT00390000003107"/>
<dbReference type="HOGENOM" id="CLU_045003_1_0_1"/>
<dbReference type="InParanoid" id="Q9VRQ9"/>
<dbReference type="OMA" id="TWHTPRD"/>
<dbReference type="OrthoDB" id="3907302at2759"/>
<dbReference type="BRENDA" id="2.3.2.5">
    <property type="organism ID" value="1994"/>
</dbReference>
<dbReference type="Reactome" id="R-DME-6798695">
    <property type="pathway name" value="Neutrophil degranulation"/>
</dbReference>
<dbReference type="BioGRID-ORCS" id="38663">
    <property type="hits" value="0 hits in 3 CRISPR screens"/>
</dbReference>
<dbReference type="EvolutionaryTrace" id="Q9VRQ9"/>
<dbReference type="GenomeRNAi" id="38663"/>
<dbReference type="PRO" id="PR:Q9VRQ9"/>
<dbReference type="Proteomes" id="UP000000803">
    <property type="component" value="Chromosome 3L"/>
</dbReference>
<dbReference type="Bgee" id="FBgn0052412">
    <property type="expression patterns" value="Expressed in secondary oocyte and 78 other cell types or tissues"/>
</dbReference>
<dbReference type="ExpressionAtlas" id="Q9VRQ9">
    <property type="expression patterns" value="baseline and differential"/>
</dbReference>
<dbReference type="GO" id="GO:0005576">
    <property type="term" value="C:extracellular region"/>
    <property type="evidence" value="ECO:0000314"/>
    <property type="project" value="FlyBase"/>
</dbReference>
<dbReference type="GO" id="GO:0016603">
    <property type="term" value="F:glutaminyl-peptide cyclotransferase activity"/>
    <property type="evidence" value="ECO:0000314"/>
    <property type="project" value="FlyBase"/>
</dbReference>
<dbReference type="GO" id="GO:0008270">
    <property type="term" value="F:zinc ion binding"/>
    <property type="evidence" value="ECO:0000318"/>
    <property type="project" value="GO_Central"/>
</dbReference>
<dbReference type="CDD" id="cd03880">
    <property type="entry name" value="M28_QC_like"/>
    <property type="match status" value="1"/>
</dbReference>
<dbReference type="FunFam" id="3.40.630.10:FF:000029">
    <property type="entry name" value="Glutaminyl-peptide cyclotransferase"/>
    <property type="match status" value="1"/>
</dbReference>
<dbReference type="Gene3D" id="3.40.630.10">
    <property type="entry name" value="Zn peptidases"/>
    <property type="match status" value="1"/>
</dbReference>
<dbReference type="InterPro" id="IPR037457">
    <property type="entry name" value="M28_QC"/>
</dbReference>
<dbReference type="InterPro" id="IPR007484">
    <property type="entry name" value="Peptidase_M28"/>
</dbReference>
<dbReference type="InterPro" id="IPR040234">
    <property type="entry name" value="QC/QCL"/>
</dbReference>
<dbReference type="PANTHER" id="PTHR12283">
    <property type="entry name" value="GLUTAMINYL-PEPTIDE CYCLOTRANSFERASE"/>
    <property type="match status" value="1"/>
</dbReference>
<dbReference type="PANTHER" id="PTHR12283:SF6">
    <property type="entry name" value="GLUTAMINYL-PEPTIDE CYCLOTRANSFERASE-RELATED"/>
    <property type="match status" value="1"/>
</dbReference>
<dbReference type="Pfam" id="PF04389">
    <property type="entry name" value="Peptidase_M28"/>
    <property type="match status" value="1"/>
</dbReference>
<dbReference type="SUPFAM" id="SSF53187">
    <property type="entry name" value="Zn-dependent exopeptidases"/>
    <property type="match status" value="1"/>
</dbReference>
<evidence type="ECO:0000250" key="1">
    <source>
        <dbReference type="UniProtKB" id="B7QK46"/>
    </source>
</evidence>
<evidence type="ECO:0000250" key="2">
    <source>
        <dbReference type="UniProtKB" id="Q16769"/>
    </source>
</evidence>
<evidence type="ECO:0000255" key="3"/>
<evidence type="ECO:0000255" key="4">
    <source>
        <dbReference type="PROSITE-ProRule" id="PRU00498"/>
    </source>
</evidence>
<evidence type="ECO:0000269" key="5">
    <source>
    </source>
</evidence>
<evidence type="ECO:0000269" key="6">
    <source>
    </source>
</evidence>
<evidence type="ECO:0000269" key="7">
    <source>
    </source>
</evidence>
<evidence type="ECO:0000303" key="8">
    <source>
    </source>
</evidence>
<evidence type="ECO:0000305" key="9"/>
<evidence type="ECO:0000312" key="10">
    <source>
        <dbReference type="EMBL" id="AAM50154.1"/>
    </source>
</evidence>
<evidence type="ECO:0000312" key="11">
    <source>
        <dbReference type="FlyBase" id="FBgn0052412"/>
    </source>
</evidence>
<evidence type="ECO:0000312" key="12">
    <source>
        <dbReference type="PDB" id="4FWU"/>
    </source>
</evidence>
<evidence type="ECO:0000312" key="13">
    <source>
        <dbReference type="Proteomes" id="UP000000803"/>
    </source>
</evidence>
<evidence type="ECO:0007744" key="14">
    <source>
        <dbReference type="PDB" id="4F9U"/>
    </source>
</evidence>
<evidence type="ECO:0007744" key="15">
    <source>
        <dbReference type="PDB" id="4F9V"/>
    </source>
</evidence>
<evidence type="ECO:0007744" key="16">
    <source>
        <dbReference type="PDB" id="4FWU"/>
    </source>
</evidence>
<evidence type="ECO:0007829" key="17">
    <source>
        <dbReference type="PDB" id="4F9U"/>
    </source>
</evidence>
<evidence type="ECO:0007829" key="18">
    <source>
        <dbReference type="PDB" id="4F9V"/>
    </source>
</evidence>
<keyword id="KW-0002">3D-structure</keyword>
<keyword id="KW-0012">Acyltransferase</keyword>
<keyword id="KW-1015">Disulfide bond</keyword>
<keyword id="KW-0325">Glycoprotein</keyword>
<keyword id="KW-0479">Metal-binding</keyword>
<keyword id="KW-1185">Reference proteome</keyword>
<keyword id="KW-0964">Secreted</keyword>
<keyword id="KW-0732">Signal</keyword>
<keyword id="KW-0808">Transferase</keyword>
<keyword id="KW-0862">Zinc</keyword>
<comment type="function">
    <text evidence="2 5 6">Acts as a glutaminyl-peptide cyclotransferase (PubMed:17722885, PubMed:22897232). Responsible for the biosynthesis of pyroglutamyl peptides (By similarity). Might be more efficient in the conversion of tri and tetrapeptides in vitro (PubMed:17722885). Might have a relative preference for substrates containing hydrophobic amino acids in vitro (PubMed:17722885).</text>
</comment>
<comment type="catalytic activity">
    <reaction evidence="5 6">
        <text>N-terminal L-glutaminyl-[peptide] = N-terminal 5-oxo-L-prolyl-[peptide] + NH4(+)</text>
        <dbReference type="Rhea" id="RHEA:23652"/>
        <dbReference type="Rhea" id="RHEA-COMP:11736"/>
        <dbReference type="Rhea" id="RHEA-COMP:11846"/>
        <dbReference type="ChEBI" id="CHEBI:28938"/>
        <dbReference type="ChEBI" id="CHEBI:64722"/>
        <dbReference type="ChEBI" id="CHEBI:87215"/>
        <dbReference type="EC" id="2.3.2.5"/>
    </reaction>
</comment>
<comment type="activity regulation">
    <text evidence="5 6">Inhibited by imidazoles (imidazole, benzimidazole, 1-benzylimidazole, 1-methylimidazole, P150/03, N-omega-acetylhistamine and 4-methylimidazole) and cysteamines (cysteamine, N-dimethylcysteamine and N-diethylcysteamine) (PubMed:17722885, PubMed:22897232). Partially inhibited by PDB50 1(3,4-dimethoxyphenyl)-3-(3-imidazol-1-ylpropyl)thiourea (PubMed:22897232).</text>
</comment>
<comment type="biophysicochemical properties">
    <kinetics>
        <KM evidence="5">7.1 mM for H-Gln-Gly-OH (at 30 degrees Celsius)</KM>
        <KM evidence="5">5 mM for H-Gln-Ala-OH (at 30 degrees Celsius)</KM>
        <KM evidence="5">1.5 mM for H-Gln-Gln-OH (at 30 degrees Celsius)</KM>
        <KM evidence="5">29.5 mM for H-Gln-Glu-OH (at 30 degrees Celsius)</KM>
        <KM evidence="5">4.1 mM for H-Gln-Gly-Pro-OH (at 30 degrees Celsius)</KM>
        <KM evidence="5">0.35 mM for H-Gln-Phe-Ala-OH (at 30 degrees Celsius)</KM>
        <KM evidence="5">0.14 mM for H-Gln-Val-Ala-OH (at 30 degrees Celsius)</KM>
        <KM evidence="5">0.065 mM for H-Gln-Glu-Tyr-Phe-NH2 (at 30 degrees Celsius)</KM>
        <KM evidence="5">0.42 mM for H-Gln-Glu-Ala-Phe-NH2 (at 30 degrees Celsius)</KM>
        <KM evidence="5">2.3 mM for H-Gln-Asp-Glu-Leu-NH2 (at 30 degrees Celsius)</KM>
        <KM evidence="5">0.08 mM for H-Gln-Lys-Arg-Leu-NH2 (at 30 degrees Celsius)</KM>
        <text evidence="5">kcat is 9 sec(-1) with H-Gln-Gly-OH as substrate (at 30 degrees Celsius). kcat is 17 sec(-1) with H-Gln-Ala-OH as substrate (at 30 degrees Celsius). kcat is 7 sec(-1) with Gln-Gln-OH as substrate (at 30 degrees Celsius). kcat is 38 sec(-1) with H-Gln-Glu-OH as substrate (at 30 degrees Celsius). kcat is 16 sec(-1) with H-Gln-Gly-Pro-OH as substrate (at 30 degrees Celsius). kcat is 22 sec(-1) with H-Gln-Phe-Ala-OH as substrate (at 30 degrees Celsius). kcat is 5.3 sec(-1) with H-Gln-Val-Ala-OH as substrate (at 30 degrees Celsius). kcat is 6.9 sec(-1) with H-Gln-Glu-Tyr-Phe-NH2 as substrate (at 30 degrees Celsius). kcat is 12.7 sec(-1) with H-Gln-Glu-Ala-Phe-NH2 as substrate (at 30 degrees Celsius). kcat is 14 sec(-1) with H-Gln-Asp-Glu-Leu-NH2 as substrate (at 30 degrees Celsius). kcat is 7 sec(-1) with H-Gln-Lys-Arg-Leu-NH2 as substrate (at 30 degrees Celsius).</text>
    </kinetics>
    <phDependence>
        <text evidence="5 6">Optimum pH is between 7.0 and 7.5.</text>
    </phDependence>
</comment>
<comment type="subcellular location">
    <subcellularLocation>
        <location evidence="5">Secreted</location>
    </subcellularLocation>
</comment>
<comment type="similarity">
    <text evidence="9">Belongs to the glutaminyl-peptide cyclotransferase family.</text>
</comment>
<comment type="caution">
    <text evidence="1">It is unclear whether this protein requires a metal cofactor for catalysis. It was originally proposed to be a Zn(2+)-dependent metalloenzyme based on structural similarities to bacterial aminopeptidases and the observation that it can bind Zn(2+) ions, typically in a 1:1 stoichiometry. However, a recent study suggests a Zn(2+)-independent catalytic mechanism.</text>
</comment>
<name>QPCT1_DROME</name>
<proteinExistence type="evidence at protein level"/>
<reference evidence="13" key="1">
    <citation type="journal article" date="2000" name="Science">
        <title>The genome sequence of Drosophila melanogaster.</title>
        <authorList>
            <person name="Adams M.D."/>
            <person name="Celniker S.E."/>
            <person name="Holt R.A."/>
            <person name="Evans C.A."/>
            <person name="Gocayne J.D."/>
            <person name="Amanatides P.G."/>
            <person name="Scherer S.E."/>
            <person name="Li P.W."/>
            <person name="Hoskins R.A."/>
            <person name="Galle R.F."/>
            <person name="George R.A."/>
            <person name="Lewis S.E."/>
            <person name="Richards S."/>
            <person name="Ashburner M."/>
            <person name="Henderson S.N."/>
            <person name="Sutton G.G."/>
            <person name="Wortman J.R."/>
            <person name="Yandell M.D."/>
            <person name="Zhang Q."/>
            <person name="Chen L.X."/>
            <person name="Brandon R.C."/>
            <person name="Rogers Y.-H.C."/>
            <person name="Blazej R.G."/>
            <person name="Champe M."/>
            <person name="Pfeiffer B.D."/>
            <person name="Wan K.H."/>
            <person name="Doyle C."/>
            <person name="Baxter E.G."/>
            <person name="Helt G."/>
            <person name="Nelson C.R."/>
            <person name="Miklos G.L.G."/>
            <person name="Abril J.F."/>
            <person name="Agbayani A."/>
            <person name="An H.-J."/>
            <person name="Andrews-Pfannkoch C."/>
            <person name="Baldwin D."/>
            <person name="Ballew R.M."/>
            <person name="Basu A."/>
            <person name="Baxendale J."/>
            <person name="Bayraktaroglu L."/>
            <person name="Beasley E.M."/>
            <person name="Beeson K.Y."/>
            <person name="Benos P.V."/>
            <person name="Berman B.P."/>
            <person name="Bhandari D."/>
            <person name="Bolshakov S."/>
            <person name="Borkova D."/>
            <person name="Botchan M.R."/>
            <person name="Bouck J."/>
            <person name="Brokstein P."/>
            <person name="Brottier P."/>
            <person name="Burtis K.C."/>
            <person name="Busam D.A."/>
            <person name="Butler H."/>
            <person name="Cadieu E."/>
            <person name="Center A."/>
            <person name="Chandra I."/>
            <person name="Cherry J.M."/>
            <person name="Cawley S."/>
            <person name="Dahlke C."/>
            <person name="Davenport L.B."/>
            <person name="Davies P."/>
            <person name="de Pablos B."/>
            <person name="Delcher A."/>
            <person name="Deng Z."/>
            <person name="Mays A.D."/>
            <person name="Dew I."/>
            <person name="Dietz S.M."/>
            <person name="Dodson K."/>
            <person name="Doup L.E."/>
            <person name="Downes M."/>
            <person name="Dugan-Rocha S."/>
            <person name="Dunkov B.C."/>
            <person name="Dunn P."/>
            <person name="Durbin K.J."/>
            <person name="Evangelista C.C."/>
            <person name="Ferraz C."/>
            <person name="Ferriera S."/>
            <person name="Fleischmann W."/>
            <person name="Fosler C."/>
            <person name="Gabrielian A.E."/>
            <person name="Garg N.S."/>
            <person name="Gelbart W.M."/>
            <person name="Glasser K."/>
            <person name="Glodek A."/>
            <person name="Gong F."/>
            <person name="Gorrell J.H."/>
            <person name="Gu Z."/>
            <person name="Guan P."/>
            <person name="Harris M."/>
            <person name="Harris N.L."/>
            <person name="Harvey D.A."/>
            <person name="Heiman T.J."/>
            <person name="Hernandez J.R."/>
            <person name="Houck J."/>
            <person name="Hostin D."/>
            <person name="Houston K.A."/>
            <person name="Howland T.J."/>
            <person name="Wei M.-H."/>
            <person name="Ibegwam C."/>
            <person name="Jalali M."/>
            <person name="Kalush F."/>
            <person name="Karpen G.H."/>
            <person name="Ke Z."/>
            <person name="Kennison J.A."/>
            <person name="Ketchum K.A."/>
            <person name="Kimmel B.E."/>
            <person name="Kodira C.D."/>
            <person name="Kraft C.L."/>
            <person name="Kravitz S."/>
            <person name="Kulp D."/>
            <person name="Lai Z."/>
            <person name="Lasko P."/>
            <person name="Lei Y."/>
            <person name="Levitsky A.A."/>
            <person name="Li J.H."/>
            <person name="Li Z."/>
            <person name="Liang Y."/>
            <person name="Lin X."/>
            <person name="Liu X."/>
            <person name="Mattei B."/>
            <person name="McIntosh T.C."/>
            <person name="McLeod M.P."/>
            <person name="McPherson D."/>
            <person name="Merkulov G."/>
            <person name="Milshina N.V."/>
            <person name="Mobarry C."/>
            <person name="Morris J."/>
            <person name="Moshrefi A."/>
            <person name="Mount S.M."/>
            <person name="Moy M."/>
            <person name="Murphy B."/>
            <person name="Murphy L."/>
            <person name="Muzny D.M."/>
            <person name="Nelson D.L."/>
            <person name="Nelson D.R."/>
            <person name="Nelson K.A."/>
            <person name="Nixon K."/>
            <person name="Nusskern D.R."/>
            <person name="Pacleb J.M."/>
            <person name="Palazzolo M."/>
            <person name="Pittman G.S."/>
            <person name="Pan S."/>
            <person name="Pollard J."/>
            <person name="Puri V."/>
            <person name="Reese M.G."/>
            <person name="Reinert K."/>
            <person name="Remington K."/>
            <person name="Saunders R.D.C."/>
            <person name="Scheeler F."/>
            <person name="Shen H."/>
            <person name="Shue B.C."/>
            <person name="Siden-Kiamos I."/>
            <person name="Simpson M."/>
            <person name="Skupski M.P."/>
            <person name="Smith T.J."/>
            <person name="Spier E."/>
            <person name="Spradling A.C."/>
            <person name="Stapleton M."/>
            <person name="Strong R."/>
            <person name="Sun E."/>
            <person name="Svirskas R."/>
            <person name="Tector C."/>
            <person name="Turner R."/>
            <person name="Venter E."/>
            <person name="Wang A.H."/>
            <person name="Wang X."/>
            <person name="Wang Z.-Y."/>
            <person name="Wassarman D.A."/>
            <person name="Weinstock G.M."/>
            <person name="Weissenbach J."/>
            <person name="Williams S.M."/>
            <person name="Woodage T."/>
            <person name="Worley K.C."/>
            <person name="Wu D."/>
            <person name="Yang S."/>
            <person name="Yao Q.A."/>
            <person name="Ye J."/>
            <person name="Yeh R.-F."/>
            <person name="Zaveri J.S."/>
            <person name="Zhan M."/>
            <person name="Zhang G."/>
            <person name="Zhao Q."/>
            <person name="Zheng L."/>
            <person name="Zheng X.H."/>
            <person name="Zhong F.N."/>
            <person name="Zhong W."/>
            <person name="Zhou X."/>
            <person name="Zhu S.C."/>
            <person name="Zhu X."/>
            <person name="Smith H.O."/>
            <person name="Gibbs R.A."/>
            <person name="Myers E.W."/>
            <person name="Rubin G.M."/>
            <person name="Venter J.C."/>
        </authorList>
    </citation>
    <scope>NUCLEOTIDE SEQUENCE [LARGE SCALE GENOMIC DNA]</scope>
    <source>
        <strain evidence="13">Berkeley</strain>
    </source>
</reference>
<reference evidence="13" key="2">
    <citation type="journal article" date="2002" name="Genome Biol.">
        <title>Annotation of the Drosophila melanogaster euchromatic genome: a systematic review.</title>
        <authorList>
            <person name="Misra S."/>
            <person name="Crosby M.A."/>
            <person name="Mungall C.J."/>
            <person name="Matthews B.B."/>
            <person name="Campbell K.S."/>
            <person name="Hradecky P."/>
            <person name="Huang Y."/>
            <person name="Kaminker J.S."/>
            <person name="Millburn G.H."/>
            <person name="Prochnik S.E."/>
            <person name="Smith C.D."/>
            <person name="Tupy J.L."/>
            <person name="Whitfield E.J."/>
            <person name="Bayraktaroglu L."/>
            <person name="Berman B.P."/>
            <person name="Bettencourt B.R."/>
            <person name="Celniker S.E."/>
            <person name="de Grey A.D.N.J."/>
            <person name="Drysdale R.A."/>
            <person name="Harris N.L."/>
            <person name="Richter J."/>
            <person name="Russo S."/>
            <person name="Schroeder A.J."/>
            <person name="Shu S.Q."/>
            <person name="Stapleton M."/>
            <person name="Yamada C."/>
            <person name="Ashburner M."/>
            <person name="Gelbart W.M."/>
            <person name="Rubin G.M."/>
            <person name="Lewis S.E."/>
        </authorList>
    </citation>
    <scope>GENOME REANNOTATION</scope>
    <source>
        <strain evidence="13">Berkeley</strain>
    </source>
</reference>
<reference evidence="10" key="3">
    <citation type="journal article" date="2002" name="Genome Biol.">
        <title>A Drosophila full-length cDNA resource.</title>
        <authorList>
            <person name="Stapleton M."/>
            <person name="Carlson J.W."/>
            <person name="Brokstein P."/>
            <person name="Yu C."/>
            <person name="Champe M."/>
            <person name="George R.A."/>
            <person name="Guarin H."/>
            <person name="Kronmiller B."/>
            <person name="Pacleb J.M."/>
            <person name="Park S."/>
            <person name="Wan K.H."/>
            <person name="Rubin G.M."/>
            <person name="Celniker S.E."/>
        </authorList>
    </citation>
    <scope>NUCLEOTIDE SEQUENCE [LARGE SCALE MRNA]</scope>
    <source>
        <strain evidence="10">Berkeley</strain>
        <tissue evidence="10">Head</tissue>
    </source>
</reference>
<reference evidence="9" key="4">
    <citation type="journal article" date="2007" name="Biochemistry">
        <title>Isolation and characterization of glutaminyl cyclases from Drosophila: evidence for enzyme forms with different subcellular localization.</title>
        <authorList>
            <person name="Schilling S."/>
            <person name="Lindner C."/>
            <person name="Koch B."/>
            <person name="Wermann M."/>
            <person name="Rahfeld J.U."/>
            <person name="von Bohlen A."/>
            <person name="Rudolph T."/>
            <person name="Reuter G."/>
            <person name="Demuth H.U."/>
        </authorList>
    </citation>
    <scope>FUNCTION</scope>
    <scope>CATALYTIC ACTIVITY</scope>
    <scope>ACTIVITY REGULATION</scope>
    <scope>BIOPHYSICOCHEMICAL PROPERTIES</scope>
    <scope>SUBCELLULAR LOCATION</scope>
</reference>
<reference evidence="14 15" key="5">
    <citation type="journal article" date="2012" name="Biochemistry">
        <title>Crystal structures of glutaminyl cyclases (QCs) from Drosophila melanogaster reveal active site conservation between insect and mammalian QCs.</title>
        <authorList>
            <person name="Koch B."/>
            <person name="Kolenko P."/>
            <person name="Buchholz M."/>
            <person name="Carrillo D.R."/>
            <person name="Parthier C."/>
            <person name="Wermann M."/>
            <person name="Rahfeld J.U."/>
            <person name="Reuter G."/>
            <person name="Schilling S."/>
            <person name="Stubbs M.T."/>
            <person name="Demuth H.U."/>
        </authorList>
    </citation>
    <scope>X-RAY CRYSTALLOGRAPHY (1.80 ANGSTROMS) OF 29-340 WILD TYPE AND OF 29-340 MUTANT ALA-113 AND ALA-136 IN COMPLEX WITH MANNOSE; ZINC AND INHIBITOR</scope>
    <scope>CATALYTIC ACTIVITY</scope>
    <scope>ACTIVITY REGULATION</scope>
    <scope>BIOPHYSICOCHEMICAL PROPERTIES</scope>
    <scope>GLYCOSYLATION AT ASN-42</scope>
    <scope>MUTAGENESIS OF CYS-113 AND CYS-136</scope>
</reference>
<reference evidence="16" key="6">
    <citation type="journal article" date="2013" name="Acta Crystallogr. F">
        <title>Structure of glutaminyl cyclase from Drosophila melanogaster in space group I4.</title>
        <authorList>
            <person name="Kolenko P."/>
            <person name="Koch B."/>
            <person name="Rahfeld J.U."/>
            <person name="Schilling S."/>
            <person name="Demuth H.U."/>
            <person name="Stubbs M.T."/>
        </authorList>
    </citation>
    <scope>X-RAY CRYSTALLOGRAPHY (2.00 ANGSTROMS) OF 29-340 IN COMPLEX WITH ZINC</scope>
    <scope>GLYCOSYLATION AT ASN-42</scope>
</reference>
<sequence>MAIGSVVFAAAGLLLLLLPPSHQQATAGNIGSQWRDDEVHFNRTLDSILVPRVVGSRGHQQVREYLVQSLNGLGFQTEVDEFKQRVPVFGELTFANVVGTINPQAQNFLALACHYDSKYFPNDPGFVGATDSAVPCAILLNTAKTLGAYLQKEFRNRSDVGLMLIFFDGEEAFKEWTDADSVYGSKHLAAKLASKRSGSQAQLAPRNIDRIEVLVLLDLIGARNPKFSSFYENTDGLHSSLVQIEKSLRTAGQLEGNNNMFLSRVSGGLVDDDHRPFLDENVPVLHLVATPFPDVWHTPRDNAANLHWPSIRNFNRVFRNFVYQYLKRHTSPVNLRFYRT</sequence>
<feature type="signal peptide" evidence="3">
    <location>
        <begin position="1"/>
        <end position="23"/>
    </location>
</feature>
<feature type="chain" id="PRO_5015100593" description="Glutaminyl-peptide cyclotransferase" evidence="3">
    <location>
        <begin position="24"/>
        <end position="340"/>
    </location>
</feature>
<feature type="active site" description="Proton acceptor" evidence="2">
    <location>
        <position position="170"/>
    </location>
</feature>
<feature type="active site" description="Proton acceptor" evidence="2">
    <location>
        <position position="218"/>
    </location>
</feature>
<feature type="binding site" evidence="6 15">
    <location>
        <position position="85"/>
    </location>
    <ligand>
        <name>alpha-D-mannopyranose</name>
        <dbReference type="ChEBI" id="CHEBI:28729"/>
    </ligand>
</feature>
<feature type="binding site" evidence="6 15">
    <location>
        <position position="91"/>
    </location>
    <ligand>
        <name>alpha-D-mannopyranose</name>
        <dbReference type="ChEBI" id="CHEBI:28729"/>
    </ligand>
</feature>
<feature type="binding site" evidence="6 7 14 15 16">
    <location>
        <position position="131"/>
    </location>
    <ligand>
        <name>Zn(2+)</name>
        <dbReference type="ChEBI" id="CHEBI:29105"/>
    </ligand>
</feature>
<feature type="binding site" evidence="6 14">
    <location>
        <position position="151"/>
    </location>
    <ligand>
        <name>alpha-D-mannopyranose</name>
        <dbReference type="ChEBI" id="CHEBI:28729"/>
    </ligand>
</feature>
<feature type="binding site" evidence="6 14">
    <location>
        <position position="155"/>
    </location>
    <ligand>
        <name>alpha-D-mannopyranose</name>
        <dbReference type="ChEBI" id="CHEBI:28729"/>
    </ligand>
</feature>
<feature type="binding site" evidence="6 7 14 15 16">
    <location>
        <position position="171"/>
    </location>
    <ligand>
        <name>Zn(2+)</name>
        <dbReference type="ChEBI" id="CHEBI:29105"/>
    </ligand>
</feature>
<feature type="binding site" evidence="6 7 14 15 16">
    <location>
        <position position="297"/>
    </location>
    <ligand>
        <name>Zn(2+)</name>
        <dbReference type="ChEBI" id="CHEBI:29105"/>
    </ligand>
</feature>
<feature type="binding site" evidence="6 14">
    <location>
        <position position="306"/>
    </location>
    <ligand>
        <name>alpha-D-mannopyranose</name>
        <dbReference type="ChEBI" id="CHEBI:28729"/>
    </ligand>
</feature>
<feature type="glycosylation site" description="N-linked (GlcNAc...) asparagine" evidence="6 7 12 14 15">
    <location>
        <position position="42"/>
    </location>
</feature>
<feature type="glycosylation site" description="N-linked (GlcNAc...) asparagine" evidence="4">
    <location>
        <position position="156"/>
    </location>
</feature>
<feature type="disulfide bond" evidence="2">
    <location>
        <begin position="113"/>
        <end position="136"/>
    </location>
</feature>
<feature type="mutagenesis site" description="Does not affect catalytic activity but decreased conformational stability in vitro; when associated with A-136." evidence="6">
    <original>C</original>
    <variation>A</variation>
    <location>
        <position position="113"/>
    </location>
</feature>
<feature type="mutagenesis site" description="Does not affect catalytic activity but decreased conformational stability in vitro; when associated with A-113." evidence="6">
    <original>C</original>
    <variation>A</variation>
    <location>
        <position position="136"/>
    </location>
</feature>
<feature type="helix" evidence="18">
    <location>
        <begin position="31"/>
        <end position="33"/>
    </location>
</feature>
<feature type="helix" evidence="17">
    <location>
        <begin position="38"/>
        <end position="48"/>
    </location>
</feature>
<feature type="helix" evidence="17">
    <location>
        <begin position="57"/>
        <end position="72"/>
    </location>
</feature>
<feature type="strand" evidence="17">
    <location>
        <begin position="76"/>
        <end position="86"/>
    </location>
</feature>
<feature type="turn" evidence="17">
    <location>
        <begin position="87"/>
        <end position="89"/>
    </location>
</feature>
<feature type="strand" evidence="17">
    <location>
        <begin position="90"/>
        <end position="102"/>
    </location>
</feature>
<feature type="strand" evidence="17">
    <location>
        <begin position="105"/>
        <end position="114"/>
    </location>
</feature>
<feature type="turn" evidence="17">
    <location>
        <begin position="129"/>
        <end position="132"/>
    </location>
</feature>
<feature type="helix" evidence="17">
    <location>
        <begin position="133"/>
        <end position="145"/>
    </location>
</feature>
<feature type="helix" evidence="17">
    <location>
        <begin position="147"/>
        <end position="150"/>
    </location>
</feature>
<feature type="helix" evidence="17">
    <location>
        <begin position="153"/>
        <end position="155"/>
    </location>
</feature>
<feature type="strand" evidence="17">
    <location>
        <begin position="158"/>
        <end position="168"/>
    </location>
</feature>
<feature type="strand" evidence="17">
    <location>
        <begin position="173"/>
        <end position="175"/>
    </location>
</feature>
<feature type="strand" evidence="17">
    <location>
        <begin position="177"/>
        <end position="181"/>
    </location>
</feature>
<feature type="helix" evidence="17">
    <location>
        <begin position="183"/>
        <end position="194"/>
    </location>
</feature>
<feature type="helix" evidence="18">
    <location>
        <begin position="199"/>
        <end position="203"/>
    </location>
</feature>
<feature type="helix" evidence="17">
    <location>
        <begin position="207"/>
        <end position="210"/>
    </location>
</feature>
<feature type="strand" evidence="17">
    <location>
        <begin position="211"/>
        <end position="219"/>
    </location>
</feature>
<feature type="strand" evidence="17">
    <location>
        <begin position="222"/>
        <end position="224"/>
    </location>
</feature>
<feature type="strand" evidence="17">
    <location>
        <begin position="227"/>
        <end position="229"/>
    </location>
</feature>
<feature type="helix" evidence="17">
    <location>
        <begin position="232"/>
        <end position="234"/>
    </location>
</feature>
<feature type="helix" evidence="17">
    <location>
        <begin position="235"/>
        <end position="250"/>
    </location>
</feature>
<feature type="strand" evidence="17">
    <location>
        <begin position="254"/>
        <end position="257"/>
    </location>
</feature>
<feature type="strand" evidence="17">
    <location>
        <begin position="261"/>
        <end position="265"/>
    </location>
</feature>
<feature type="helix" evidence="17">
    <location>
        <begin position="275"/>
        <end position="278"/>
    </location>
</feature>
<feature type="turn" evidence="17">
    <location>
        <begin position="279"/>
        <end position="281"/>
    </location>
</feature>
<feature type="strand" evidence="17">
    <location>
        <begin position="284"/>
        <end position="288"/>
    </location>
</feature>
<feature type="turn" evidence="17">
    <location>
        <begin position="294"/>
        <end position="297"/>
    </location>
</feature>
<feature type="helix" evidence="17">
    <location>
        <begin position="303"/>
        <end position="305"/>
    </location>
</feature>
<feature type="helix" evidence="17">
    <location>
        <begin position="308"/>
        <end position="328"/>
    </location>
</feature>
<organism evidence="13">
    <name type="scientific">Drosophila melanogaster</name>
    <name type="common">Fruit fly</name>
    <dbReference type="NCBI Taxonomy" id="7227"/>
    <lineage>
        <taxon>Eukaryota</taxon>
        <taxon>Metazoa</taxon>
        <taxon>Ecdysozoa</taxon>
        <taxon>Arthropoda</taxon>
        <taxon>Hexapoda</taxon>
        <taxon>Insecta</taxon>
        <taxon>Pterygota</taxon>
        <taxon>Neoptera</taxon>
        <taxon>Endopterygota</taxon>
        <taxon>Diptera</taxon>
        <taxon>Brachycera</taxon>
        <taxon>Muscomorpha</taxon>
        <taxon>Ephydroidea</taxon>
        <taxon>Drosophilidae</taxon>
        <taxon>Drosophila</taxon>
        <taxon>Sophophora</taxon>
    </lineage>
</organism>
<protein>
    <recommendedName>
        <fullName evidence="9">Glutaminyl-peptide cyclotransferase</fullName>
        <ecNumber evidence="5 6">2.3.2.5</ecNumber>
    </recommendedName>
    <alternativeName>
        <fullName evidence="8 11">Glutaminyl cyclase</fullName>
    </alternativeName>
</protein>
<accession>Q9VRQ9</accession>